<proteinExistence type="inferred from homology"/>
<name>KAD_ECO7I</name>
<keyword id="KW-0007">Acetylation</keyword>
<keyword id="KW-0067">ATP-binding</keyword>
<keyword id="KW-0963">Cytoplasm</keyword>
<keyword id="KW-0418">Kinase</keyword>
<keyword id="KW-0545">Nucleotide biosynthesis</keyword>
<keyword id="KW-0547">Nucleotide-binding</keyword>
<keyword id="KW-0808">Transferase</keyword>
<accession>B7NIF6</accession>
<protein>
    <recommendedName>
        <fullName evidence="2">Adenylate kinase</fullName>
        <shortName evidence="2">AK</shortName>
        <ecNumber evidence="2">2.7.4.3</ecNumber>
    </recommendedName>
    <alternativeName>
        <fullName evidence="2">ATP-AMP transphosphorylase</fullName>
    </alternativeName>
    <alternativeName>
        <fullName evidence="2">ATP:AMP phosphotransferase</fullName>
    </alternativeName>
    <alternativeName>
        <fullName evidence="2">Adenylate monophosphate kinase</fullName>
    </alternativeName>
</protein>
<dbReference type="EC" id="2.7.4.3" evidence="2"/>
<dbReference type="EMBL" id="CU928164">
    <property type="protein sequence ID" value="CAR16337.1"/>
    <property type="molecule type" value="Genomic_DNA"/>
</dbReference>
<dbReference type="RefSeq" id="WP_001313630.1">
    <property type="nucleotide sequence ID" value="NC_011750.1"/>
</dbReference>
<dbReference type="RefSeq" id="YP_002406243.1">
    <property type="nucleotide sequence ID" value="NC_011750.1"/>
</dbReference>
<dbReference type="SMR" id="B7NIF6"/>
<dbReference type="STRING" id="585057.ECIAI39_0197"/>
<dbReference type="GeneID" id="86945388"/>
<dbReference type="KEGG" id="ect:ECIAI39_0197"/>
<dbReference type="PATRIC" id="fig|585057.6.peg.210"/>
<dbReference type="HOGENOM" id="CLU_032354_1_2_6"/>
<dbReference type="UniPathway" id="UPA00588">
    <property type="reaction ID" value="UER00649"/>
</dbReference>
<dbReference type="Proteomes" id="UP000000749">
    <property type="component" value="Chromosome"/>
</dbReference>
<dbReference type="GO" id="GO:0005737">
    <property type="term" value="C:cytoplasm"/>
    <property type="evidence" value="ECO:0007669"/>
    <property type="project" value="UniProtKB-SubCell"/>
</dbReference>
<dbReference type="GO" id="GO:0004017">
    <property type="term" value="F:adenylate kinase activity"/>
    <property type="evidence" value="ECO:0007669"/>
    <property type="project" value="UniProtKB-UniRule"/>
</dbReference>
<dbReference type="GO" id="GO:0005524">
    <property type="term" value="F:ATP binding"/>
    <property type="evidence" value="ECO:0007669"/>
    <property type="project" value="UniProtKB-UniRule"/>
</dbReference>
<dbReference type="GO" id="GO:0044209">
    <property type="term" value="P:AMP salvage"/>
    <property type="evidence" value="ECO:0007669"/>
    <property type="project" value="UniProtKB-UniRule"/>
</dbReference>
<dbReference type="CDD" id="cd01428">
    <property type="entry name" value="ADK"/>
    <property type="match status" value="1"/>
</dbReference>
<dbReference type="FunFam" id="3.40.50.300:FF:000106">
    <property type="entry name" value="Adenylate kinase mitochondrial"/>
    <property type="match status" value="1"/>
</dbReference>
<dbReference type="Gene3D" id="3.40.50.300">
    <property type="entry name" value="P-loop containing nucleotide triphosphate hydrolases"/>
    <property type="match status" value="1"/>
</dbReference>
<dbReference type="HAMAP" id="MF_00235">
    <property type="entry name" value="Adenylate_kinase_Adk"/>
    <property type="match status" value="1"/>
</dbReference>
<dbReference type="InterPro" id="IPR006259">
    <property type="entry name" value="Adenyl_kin_sub"/>
</dbReference>
<dbReference type="InterPro" id="IPR000850">
    <property type="entry name" value="Adenylat/UMP-CMP_kin"/>
</dbReference>
<dbReference type="InterPro" id="IPR033690">
    <property type="entry name" value="Adenylat_kinase_CS"/>
</dbReference>
<dbReference type="InterPro" id="IPR007862">
    <property type="entry name" value="Adenylate_kinase_lid-dom"/>
</dbReference>
<dbReference type="InterPro" id="IPR027417">
    <property type="entry name" value="P-loop_NTPase"/>
</dbReference>
<dbReference type="NCBIfam" id="TIGR01351">
    <property type="entry name" value="adk"/>
    <property type="match status" value="1"/>
</dbReference>
<dbReference type="NCBIfam" id="NF001379">
    <property type="entry name" value="PRK00279.1-1"/>
    <property type="match status" value="1"/>
</dbReference>
<dbReference type="NCBIfam" id="NF001380">
    <property type="entry name" value="PRK00279.1-2"/>
    <property type="match status" value="1"/>
</dbReference>
<dbReference type="NCBIfam" id="NF001381">
    <property type="entry name" value="PRK00279.1-3"/>
    <property type="match status" value="1"/>
</dbReference>
<dbReference type="NCBIfam" id="NF011100">
    <property type="entry name" value="PRK14527.1"/>
    <property type="match status" value="1"/>
</dbReference>
<dbReference type="PANTHER" id="PTHR23359">
    <property type="entry name" value="NUCLEOTIDE KINASE"/>
    <property type="match status" value="1"/>
</dbReference>
<dbReference type="Pfam" id="PF00406">
    <property type="entry name" value="ADK"/>
    <property type="match status" value="1"/>
</dbReference>
<dbReference type="Pfam" id="PF05191">
    <property type="entry name" value="ADK_lid"/>
    <property type="match status" value="1"/>
</dbReference>
<dbReference type="PRINTS" id="PR00094">
    <property type="entry name" value="ADENYLTKNASE"/>
</dbReference>
<dbReference type="SUPFAM" id="SSF52540">
    <property type="entry name" value="P-loop containing nucleoside triphosphate hydrolases"/>
    <property type="match status" value="1"/>
</dbReference>
<dbReference type="PROSITE" id="PS00113">
    <property type="entry name" value="ADENYLATE_KINASE"/>
    <property type="match status" value="1"/>
</dbReference>
<feature type="chain" id="PRO_1000191146" description="Adenylate kinase">
    <location>
        <begin position="1"/>
        <end position="214"/>
    </location>
</feature>
<feature type="region of interest" description="NMP" evidence="2">
    <location>
        <begin position="30"/>
        <end position="59"/>
    </location>
</feature>
<feature type="region of interest" description="LID">
    <location>
        <begin position="122"/>
        <end position="159"/>
    </location>
</feature>
<feature type="binding site" evidence="2">
    <location>
        <begin position="10"/>
        <end position="15"/>
    </location>
    <ligand>
        <name>ATP</name>
        <dbReference type="ChEBI" id="CHEBI:30616"/>
    </ligand>
</feature>
<feature type="binding site" evidence="2">
    <location>
        <position position="31"/>
    </location>
    <ligand>
        <name>AMP</name>
        <dbReference type="ChEBI" id="CHEBI:456215"/>
    </ligand>
</feature>
<feature type="binding site" evidence="2">
    <location>
        <position position="36"/>
    </location>
    <ligand>
        <name>AMP</name>
        <dbReference type="ChEBI" id="CHEBI:456215"/>
    </ligand>
</feature>
<feature type="binding site" evidence="2">
    <location>
        <begin position="57"/>
        <end position="59"/>
    </location>
    <ligand>
        <name>AMP</name>
        <dbReference type="ChEBI" id="CHEBI:456215"/>
    </ligand>
</feature>
<feature type="binding site" evidence="2">
    <location>
        <begin position="85"/>
        <end position="88"/>
    </location>
    <ligand>
        <name>AMP</name>
        <dbReference type="ChEBI" id="CHEBI:456215"/>
    </ligand>
</feature>
<feature type="binding site" evidence="2">
    <location>
        <position position="92"/>
    </location>
    <ligand>
        <name>AMP</name>
        <dbReference type="ChEBI" id="CHEBI:456215"/>
    </ligand>
</feature>
<feature type="binding site" evidence="2">
    <location>
        <position position="123"/>
    </location>
    <ligand>
        <name>ATP</name>
        <dbReference type="ChEBI" id="CHEBI:30616"/>
    </ligand>
</feature>
<feature type="binding site" evidence="2">
    <location>
        <begin position="132"/>
        <end position="133"/>
    </location>
    <ligand>
        <name>ATP</name>
        <dbReference type="ChEBI" id="CHEBI:30616"/>
    </ligand>
</feature>
<feature type="binding site" evidence="2">
    <location>
        <position position="156"/>
    </location>
    <ligand>
        <name>AMP</name>
        <dbReference type="ChEBI" id="CHEBI:456215"/>
    </ligand>
</feature>
<feature type="binding site" evidence="2">
    <location>
        <position position="167"/>
    </location>
    <ligand>
        <name>AMP</name>
        <dbReference type="ChEBI" id="CHEBI:456215"/>
    </ligand>
</feature>
<feature type="binding site" evidence="2">
    <location>
        <position position="200"/>
    </location>
    <ligand>
        <name>ATP</name>
        <dbReference type="ChEBI" id="CHEBI:30616"/>
    </ligand>
</feature>
<feature type="modified residue" description="N6-acetyllysine" evidence="1">
    <location>
        <position position="192"/>
    </location>
</feature>
<gene>
    <name evidence="2" type="primary">adk</name>
    <name type="ordered locus">ECIAI39_0197</name>
</gene>
<reference key="1">
    <citation type="journal article" date="2009" name="PLoS Genet.">
        <title>Organised genome dynamics in the Escherichia coli species results in highly diverse adaptive paths.</title>
        <authorList>
            <person name="Touchon M."/>
            <person name="Hoede C."/>
            <person name="Tenaillon O."/>
            <person name="Barbe V."/>
            <person name="Baeriswyl S."/>
            <person name="Bidet P."/>
            <person name="Bingen E."/>
            <person name="Bonacorsi S."/>
            <person name="Bouchier C."/>
            <person name="Bouvet O."/>
            <person name="Calteau A."/>
            <person name="Chiapello H."/>
            <person name="Clermont O."/>
            <person name="Cruveiller S."/>
            <person name="Danchin A."/>
            <person name="Diard M."/>
            <person name="Dossat C."/>
            <person name="Karoui M.E."/>
            <person name="Frapy E."/>
            <person name="Garry L."/>
            <person name="Ghigo J.M."/>
            <person name="Gilles A.M."/>
            <person name="Johnson J."/>
            <person name="Le Bouguenec C."/>
            <person name="Lescat M."/>
            <person name="Mangenot S."/>
            <person name="Martinez-Jehanne V."/>
            <person name="Matic I."/>
            <person name="Nassif X."/>
            <person name="Oztas S."/>
            <person name="Petit M.A."/>
            <person name="Pichon C."/>
            <person name="Rouy Z."/>
            <person name="Ruf C.S."/>
            <person name="Schneider D."/>
            <person name="Tourret J."/>
            <person name="Vacherie B."/>
            <person name="Vallenet D."/>
            <person name="Medigue C."/>
            <person name="Rocha E.P.C."/>
            <person name="Denamur E."/>
        </authorList>
    </citation>
    <scope>NUCLEOTIDE SEQUENCE [LARGE SCALE GENOMIC DNA]</scope>
    <source>
        <strain>IAI39 / ExPEC</strain>
    </source>
</reference>
<comment type="function">
    <text evidence="2">Catalyzes the reversible transfer of the terminal phosphate group between ATP and AMP. Plays an important role in cellular energy homeostasis and in adenine nucleotide metabolism.</text>
</comment>
<comment type="catalytic activity">
    <reaction evidence="2">
        <text>AMP + ATP = 2 ADP</text>
        <dbReference type="Rhea" id="RHEA:12973"/>
        <dbReference type="ChEBI" id="CHEBI:30616"/>
        <dbReference type="ChEBI" id="CHEBI:456215"/>
        <dbReference type="ChEBI" id="CHEBI:456216"/>
        <dbReference type="EC" id="2.7.4.3"/>
    </reaction>
</comment>
<comment type="pathway">
    <text evidence="2">Purine metabolism; AMP biosynthesis via salvage pathway; AMP from ADP: step 1/1.</text>
</comment>
<comment type="subunit">
    <text evidence="2">Monomer.</text>
</comment>
<comment type="subcellular location">
    <subcellularLocation>
        <location evidence="2">Cytoplasm</location>
    </subcellularLocation>
</comment>
<comment type="domain">
    <text evidence="2">Consists of three domains, a large central CORE domain and two small peripheral domains, NMPbind and LID, which undergo movements during catalysis. The LID domain closes over the site of phosphoryl transfer upon ATP binding. Assembling and dissambling the active center during each catalytic cycle provides an effective means to prevent ATP hydrolysis.</text>
</comment>
<comment type="similarity">
    <text evidence="2">Belongs to the adenylate kinase family.</text>
</comment>
<sequence>MRIILLGAPGAGKGTQAQFIMEKYGIPQISTGDMLRAAVKSGSELGKQAKDIMDAGKLVTDELVIALVKERIAQEDCRNGFLLDGFPRTIPQADAMKEAGINVDYVLEFDVPDELIVDRIVGRRVHAPSGRVYHVKFNPPKVEGKDDVTGEELTTRKDDQEETVRKRLVEYHQMTAPLIGYYSKEAEAGNTKYAKVDGTKPVAEVRAALEKILG</sequence>
<evidence type="ECO:0000250" key="1"/>
<evidence type="ECO:0000255" key="2">
    <source>
        <dbReference type="HAMAP-Rule" id="MF_00235"/>
    </source>
</evidence>
<organism>
    <name type="scientific">Escherichia coli O7:K1 (strain IAI39 / ExPEC)</name>
    <dbReference type="NCBI Taxonomy" id="585057"/>
    <lineage>
        <taxon>Bacteria</taxon>
        <taxon>Pseudomonadati</taxon>
        <taxon>Pseudomonadota</taxon>
        <taxon>Gammaproteobacteria</taxon>
        <taxon>Enterobacterales</taxon>
        <taxon>Enterobacteriaceae</taxon>
        <taxon>Escherichia</taxon>
    </lineage>
</organism>